<keyword id="KW-1072">Activation of host autophagy by virus</keyword>
<keyword id="KW-1132">Decay of host mRNAs by virus</keyword>
<keyword id="KW-1015">Disulfide bond</keyword>
<keyword id="KW-1262">Eukaryotic host gene expression shutoff by virus</keyword>
<keyword id="KW-1193">Eukaryotic host translation shutoff by virus</keyword>
<keyword id="KW-1035">Host cytoplasm</keyword>
<keyword id="KW-1190">Host gene expression shutoff by virus</keyword>
<keyword id="KW-1043">Host membrane</keyword>
<keyword id="KW-1192">Host mRNA suppression by virus</keyword>
<keyword id="KW-0945">Host-virus interaction</keyword>
<keyword id="KW-0378">Hydrolase</keyword>
<keyword id="KW-1090">Inhibition of host innate immune response by virus</keyword>
<keyword id="KW-1114">Inhibition of host interferon signaling pathway by virus</keyword>
<keyword id="KW-1092">Inhibition of host IRF3 by virus</keyword>
<keyword id="KW-1095">Inhibition of host ISG15 by virus</keyword>
<keyword id="KW-1113">Inhibition of host RLR pathway by virus</keyword>
<keyword id="KW-0922">Interferon antiviral system evasion</keyword>
<keyword id="KW-0472">Membrane</keyword>
<keyword id="KW-0479">Metal-binding</keyword>
<keyword id="KW-0489">Methyltransferase</keyword>
<keyword id="KW-1127">Modulation of host ubiquitin pathway by viral deubiquitinase</keyword>
<keyword id="KW-1130">Modulation of host ubiquitin pathway by virus</keyword>
<keyword id="KW-0645">Protease</keyword>
<keyword id="KW-1185">Reference proteome</keyword>
<keyword id="KW-0677">Repeat</keyword>
<keyword id="KW-0688">Ribosomal frameshifting</keyword>
<keyword id="KW-0694">RNA-binding</keyword>
<keyword id="KW-0788">Thiol protease</keyword>
<keyword id="KW-0808">Transferase</keyword>
<keyword id="KW-0812">Transmembrane</keyword>
<keyword id="KW-1133">Transmembrane helix</keyword>
<keyword id="KW-0833">Ubl conjugation pathway</keyword>
<keyword id="KW-0899">Viral immunoevasion</keyword>
<keyword id="KW-0862">Zinc</keyword>
<keyword id="KW-0863">Zinc-finger</keyword>
<gene>
    <name type="ORF">1a</name>
</gene>
<sequence>MEGVPDPPKLKSMVVTTLKWCDPFANPNVTGWDIPIEEALEYAKQQLRTPEPQLVFVPYYLSHAPGISGDRVVITDSIWYATNFGWQPIRELAMDKDGVRYGRGGTHGVLLPMQDPSFIMGDIDIQIRKYGIGANSPPDVLPLWDGFSDPGPDVGPYLDFPDNCCPTKPKAKRGGDVYLSDQYGFDNNGILVEPVMKLLGVIKSDFTLEQLLAALGKYRTEDGYDLPDGYVKVAIKVGRKAVPVLKQSIFTVVGVTEQLVPGYYYPFSTSSVVEHTKPTRGGPVGKTVEAVMLSLYGTNNYNPATPVARLKCSYCDYYGWTPLKDIGTVNCLCGAEFQLTSSCVDAESAGVIKPGCVMLLDKSPGMRLIPGNRTYVSFGGAIWSPIGKVNGVTVWVPRAYSIVAGEHSGAVGSGDTVAINKELVEYLIEGIRVDADTLDNPTCATFIANLDCDTKAPVVHTVESLQGLCLANKIMLGDKPLPTDEFHPFIVGLAYHVQRACWYGALASRTFEAFRDFVRTEEERFAQFFGKVCAPINGCVYLAYTTGRVTLFSAYQVLNTAIAKSKDAFGGVAAIVVDMLKPILEWVLKKMSIAKGAWLPYAEGLLALFKAQFTVVKGKFQFLRASLNSKCHSLCDLLTTIMSKLLTSVKWAGCKVDALYTGTYYYFSRKGVLTEVQLCAKRLGLLLTPKQQKMEVEVLDGDFDAPVTLTDLELEECTGVLEEVFGASDVKLVKGTLVSLASKLFVRTEDGFLYRYVKSGGVLGKAFRLRGGGVSKVTFGDEEVHTIPNTVTVNFSYDVCEGLDAILDKVMAPFQVEEGTKLEDLACVVQKAVYERLSDLFSDCPAELRPINLEDFLTSECFVYSKDYEKILMPEMYFSLEDAVPVDDEMVDDIEDTVEQASDSDDQWLGDEGAEDCDNTIQDVDVATSMTTPCGYTKIAEHVYIKCADIVQEARNYSYAVLVNAANVNLHHGGGVAGALNRATNNAMQKESSEYIKANGSLQPGGHVLLSSHGLASHGILHVVGPDKRLGQDLALLDAVYAAYTGFDSVLTPLVSAGIFGFTVEESLCSLVKNVACTTYVVVYDRQLYERALATSFDVPGPQSSVQHVPAIDWAEAVEVQESIVDQVETPSLGAVDTVDSNADSGLNETARSPENVVGSVPDDVVADVESCVRDLVRQVVKKVKRDKRPPPIVPQQTVEQQPQEISSPGDCNTVLVDVVSMSFSAMVNFGKEKGLLIPVVIDYPAFLKVLKRFSPKEGLFSSNGYEFYGYSRDKPLHEVSKDLNSLGRPLIMIPFGFIVNGQTLAVSAVSMRGLTVPHTVVVPSESSVPLYRAYFNGVFSGDTTAVQDFVVDILLNGARDWDVLQTTCTVDRKVYKTICKRGNTYLCFDDTNLYAITGDVVLKFATVSKARAYLETKLCAPEPLIKVLTTVDGINYSTVLVSTAQSYRAQIGTVFCDGHDWSNKNPMPTDEGTHLYKQDNFSSAEVTAIREYYGVDDSNIIARAMSIRKTVQTWPYTVVDGRVLLAQRDSNCYLNVAISLLQDIDVSFSTPWVCRAYDALKGGNPLPMAEVLIALGKATPGVSDDAHMVLSAVLNHGTVTARRVMQTVCEHCGVSQMVFTGTDACTFYGSVVLDDLYAPVSVVCQCGRPAIRYVSEQKSPWLLMSCTPTQVPLDTSGIWKTAIVFRGPVTAGHYMYAVNGTLISVYDANTRRRTSDLKLPATDILYGPTSFTSDSKVETYYLDGVKRTTIDPDFSKYVKRGDYYFTTAPIEVVAAPKLVTSYDGFYLSSCQNPQLAESFNKAINATKTGPMKLLTMYPNVAGDVVAISDDNVVAHPYGSLHMGKPVLFVTRPNTWKKLVPLLSTVVVNTPNTYDVLAVDPLPVNNETSEEPISVKAPIPLYGLKATMVLNGTTYVPGNKGHLLCLKEFTLTDLQTFYVEGVQPFVLLKASHLSKVLGLRVSDSSLHVNHLSKGVVYAYAATRLTTRVTTSLLGGLVTRSVRKTADFVRSTNPGSKCVGLLCLFYQLFMRFWLLVKKPPIVKVSGIIAYNTGCGVTTCVLNYLRSRCGNISWSRLLKLLRYMLYIWFVWTCLTICGVWLSEPYAPSLVTRFKYFLGIVMPCDYVLVNETGTGWLHHLCMAGMDSLDYPALRMQQHRYGSPYNYTYILMLLEAFFAYLLYTPALPIVGILAVLHLIVLYLPIPLGNSWLVVFLYYIIRLVPFTSMLRMYIVIAFLWLCYKGFLHVRYGCNNVACLMCYKKNVAKRIECSTVVNGVKRMFYVNANGGTHFCTKHNWNCVSCDTYTVDSTFICRQVALDLSAQFKRPIIHTDEAYYEVTSVEVRNGYVYCYFESDGQRSYERFPMDAFTNVSKLHYSELKGAAPAFNVLVFDATNRIEENAVKTAAIYYAQLACKPILLVDKRMVGVVGDDATIARAMFEAYAQNYLLKYSIAMDKVKHLYSTALQQISSGMTVESVLKVFVGSTRAEAKDLESDVDTNDLVSCIRLCHQEGWEWTTDSWNNLVPTYIKQDTLSTLEVGQFMTANAKYVNANIAKGAAVNLIWRYADFIKLSESMRRQLKVAARKTGLNLLVTTSSLKADVPCMVTPFKIIGGHRRIVSWRRVLIHVFMLLVVLNPQWFTPWYIMRPIEYNVVDFKVIDNAVIRDITSADQCFANKFSAFENWYSNRYGSYVNSRGCPMVVGVVSDIVGSLVPGLPARFLRVGTTLLPLVNYGLGAVGSVCYTPHYAINYDVFDTSACVLAATCTLFSSASGERMPYCADAALIQNASRYDMLKPHVMYPFYEHSGYIRFPEVISAGVHIVRTMAMEYCKVGRCDVSEAGLCMSLQPRWVVNNAYFRQQSGVYCGTSAFDLFMNMLLPIFTPVGAVDITTSILMGALLAVVVSMSLYYLLRFRRAFGDYSGVIFTNILAFVLNVIVLCLEGPYPMLPSIYAMVFLYATCYFGSDIACMMHVSFLIMFAGVVPLWVTVLYIVVVLSRHILWFASLCTKRTVQVGDLAFHSFQDAALQTFMLDKEVFLRLKREISSDAYFKYLAMYNKYKYYSGPMDTAAYREAACSHLVMALEKYSNGGGDTIYQPPRCSVASAALQAGLTRMAHPSGLVEPCLVKVNYGSMTLNGIWLDNFVICPRHVMCSRDELANPDYPRLSMRAANYDFHVSQNGHNIRVIGHTMEGSLLKLTVDVNNPKTPAYSFIRVSTGQAMSLLACYDGLPTGVYTCTLRSNGTMRASFLCGSCGSPGFVMNGKEVQFCYLHQLELPNGTHTGTDFSGVFYGPFEDKQVPQLAAPDCTITVNVLAWLYAAVLSGENWFLTKSSISPAEFNNCAVKYMCQSVTSESLQVLQPLAAKTGISVERMLSALKVLLSAGFCGRTIMGSCSLEDEHTPYDIGRQMLGVKLQGKFQSMFRWTLQWFAIIFVLTILILLQLAQWTFVGALPFTLLLPLIGFVAVCVGFVSLLIKHKHTYLTVYLLPVAMVTAYYNFQYTPEGVQGYLLSLYNYVNPGRIDVIGTDLLTMLIISVACTLLSVRMVRTDAYSRIWYVCTAVGWLYNCWTGSADTVAISYLTFMVSVFTNYTGVACASLYAAQFMVWVLKFLDPTILLLYGRFRCVLVCYLLVGYLCTCYFGVFNLINRLFRCTLGNYEYVVSSQELRYMNSHGLLPPTNSWQALMLNIKLAGIGGIPIYRVSTIQSNMTDLKCTSVVLLSVLQQLRVESSSKLWALCVKLHNEILASNSPTEAFEAFVSLLSVLLSLPGAINLDELCSSILENNSVLQAVASEFSNLSSYVDYENAQKAYDTAVATGAPASTVNALKKAMNVAKSVLDKDVATTRKLERMSELAMTAMYKQARAEDRRSKVTAAMQTMLFNMIRRLDSDALSNILNNARNGVVPLGVIPRTAANKLLLVVPDFSVYTATITMPTLTYAGSAWDVMQVADADGKTVNATDITRENSVNLAWPLVVTAQRQQATSPVKLQNNELMPQTVKRMNVVAGVSQTACVTDAVAYYNATKEGRHVMAILADTDGLAFAKVEKSTGDGFVILELEPPCKFMVDTPKGPALKYLYFTKGLKNLCRGTVLGTLACTVRLHAGSATEVASNSSILSLCSFSVDPEATYKDYLDNGGSPIGNCVKMLTPHTGTGLAITAKPDANIDQESFGGASCCLYCRCHIEHPGASGVCKYKGKFVQIPLVGVNDPIGFCIRNVVCAVCNMWQGYGCPCSSLREINLQARDECFLNESGVLVE</sequence>
<organism>
    <name type="scientific">Bat coronavirus HKU9</name>
    <name type="common">BtCoV</name>
    <name type="synonym">BtCoV/HKU9</name>
    <dbReference type="NCBI Taxonomy" id="694006"/>
    <lineage>
        <taxon>Viruses</taxon>
        <taxon>Riboviria</taxon>
        <taxon>Orthornavirae</taxon>
        <taxon>Pisuviricota</taxon>
        <taxon>Pisoniviricetes</taxon>
        <taxon>Nidovirales</taxon>
        <taxon>Cornidovirineae</taxon>
        <taxon>Coronaviridae</taxon>
        <taxon>Orthocoronavirinae</taxon>
        <taxon>Betacoronavirus</taxon>
        <taxon>Nobecovirus</taxon>
    </lineage>
</organism>
<reference key="1">
    <citation type="journal article" date="2007" name="J. Virol.">
        <title>Comparative analysis of twelve genomes of three novel group 2c and group 2d coronaviruses reveals unique group and subgroup features.</title>
        <authorList>
            <person name="Woo P.C.Y."/>
            <person name="Wang M."/>
            <person name="Lau S.K.P."/>
            <person name="Xu H.F."/>
            <person name="Poon R.W.S."/>
            <person name="Guo R."/>
            <person name="Wong B.H.L."/>
            <person name="Gao K."/>
            <person name="Tsoi H.-W."/>
            <person name="Huang Y."/>
            <person name="Li K.S.M."/>
            <person name="Lam C.S.F."/>
            <person name="Chan K.-H."/>
            <person name="Zheng B.-J."/>
            <person name="Yuen K.-Y."/>
        </authorList>
    </citation>
    <scope>NUCLEOTIDE SEQUENCE [GENOMIC RNA]</scope>
    <source>
        <strain>Isolate HKU9-1</strain>
    </source>
</reference>
<reference key="2">
    <citation type="journal article" date="2009" name="J. Virol.">
        <title>Suppression of host gene expression by nsp1 proteins of group 2 bat coronaviruses.</title>
        <authorList>
            <person name="Tohya Y."/>
            <person name="Narayanan K."/>
            <person name="Kamitani W."/>
            <person name="Huang C."/>
            <person name="Lokugamage K."/>
            <person name="Makino S."/>
        </authorList>
    </citation>
    <scope>FUNCTION OF NSP1</scope>
</reference>
<name>R1A_BCHK9</name>
<comment type="function">
    <text evidence="1">The papain-like proteinase (PL-PRO) is responsible for the cleavages located at the N-terminus of replicase polyprotein. In addition, PL-PRO possesses a deubiquitinating/deISGylating activity and processes both 'Lys-48'- and 'Lys-63'-linked polyubiquitin chains from cellular substrates. Antagonizes innate immune induction of type I interferon by blocking the phosphorylation, dimerization and subsequent nuclear translocation of host IRF-3 (By similarity).</text>
</comment>
<comment type="function">
    <molecule>3C-like proteinase nsp5</molecule>
    <text evidence="7">Responsible for the majority of cleavages as it cleaves the C-terminus of replicase polyprotein at 11 sites. Recognizes substrates containing the core sequence [ILMVF]-Q-|-[SGACN]. Inhibited by the substrate-analog Cbz-Val-Asn-Ser-Thr-Leu-Gln-CMK. Also contains an ADP-ribose-1''-phosphate (ADRP)-binding function (By similarity).</text>
</comment>
<comment type="function">
    <text evidence="1">Nsp7-nsp8 hexadecamer may possibly confer processivity to the polymerase, maybe by binding to dsRNA or by producing primers utilized by the latter.</text>
</comment>
<comment type="function">
    <molecule>RNA-capping enzyme subunit nsp9</molecule>
    <text evidence="2">Catalytic subunit of viral RNA capping enzyme which catalyzes the RNA guanylyltransferase reaction for genomic and sub-genomic RNAs. The kinase-like NiRAN domain of NSP12 transfers RNA to the amino terminus of NSP9, forming a covalent RNA-protein intermediate. Subsequently, the NiRAN domain transfers RNA to GDP, forming the core cap structure GpppA-RNA. The NSP14 and NSP16 methyltransferases then add methyl groups to form functional cap structures.</text>
</comment>
<comment type="function">
    <molecule>Non-structural protein 1</molecule>
    <text evidence="24">Binds to the 40S ribosomal subunit and inhibits host translation. The nsp1-40S ribosome complex further induces an endonucleolytic cleavage near the 5'UTR of host mRNAs, targeting them for degradation. By suppressing host gene expression, nsp1 facilitates efficient viral gene expression in infected cells and evasion from host immune response.</text>
</comment>
<comment type="catalytic activity">
    <molecule>Papain-like protease nsp3</molecule>
    <reaction evidence="2">
        <text>Thiol-dependent hydrolysis of ester, thioester, amide, peptide and isopeptide bonds formed by the C-terminal Gly of ubiquitin (a 76-residue protein attached to proteins as an intracellular targeting signal).</text>
        <dbReference type="EC" id="3.4.19.12"/>
    </reaction>
</comment>
<comment type="catalytic activity">
    <molecule>3C-like proteinase nsp5</molecule>
    <reaction evidence="2">
        <text>TSAVLQ-|-SGFRK-NH2 and SGVTFQ-|-GKFKK the two peptides corresponding to the two self-cleavage sites of the SARS 3C-like proteinase are the two most reactive peptide substrates. The enzyme exhibits a strong preference for substrates containing Gln at P1 position and Leu at P2 position.</text>
        <dbReference type="EC" id="3.4.22.69"/>
    </reaction>
</comment>
<comment type="catalytic activity">
    <molecule>RNA-capping enzyme subunit nsp9</molecule>
    <reaction evidence="2">
        <text>a 5'-end diphospho-ribonucleoside in mRNA + GTP + H(+) = a 5'-end (5'-triphosphoguanosine)-ribonucleoside in mRNA + diphosphate</text>
        <dbReference type="Rhea" id="RHEA:67012"/>
        <dbReference type="Rhea" id="RHEA-COMP:17165"/>
        <dbReference type="Rhea" id="RHEA-COMP:17166"/>
        <dbReference type="ChEBI" id="CHEBI:15378"/>
        <dbReference type="ChEBI" id="CHEBI:33019"/>
        <dbReference type="ChEBI" id="CHEBI:37565"/>
        <dbReference type="ChEBI" id="CHEBI:167616"/>
        <dbReference type="ChEBI" id="CHEBI:167617"/>
        <dbReference type="EC" id="2.7.7.50"/>
    </reaction>
    <physiologicalReaction direction="right-to-left" evidence="2">
        <dbReference type="Rhea" id="RHEA:67014"/>
    </physiologicalReaction>
</comment>
<comment type="subunit">
    <text evidence="1">3CL-PRO exists as monomer and homodimer. Eight copies of nsp7 and eight copies of nsp8 assemble to form a heterohexadecamer. Nsp9 is a dimer. Nsp10 forms a dodecamer (By similarity).</text>
</comment>
<comment type="subcellular location">
    <molecule>Papain-like protease nsp3</molecule>
    <subcellularLocation>
        <location evidence="25">Host membrane</location>
        <topology evidence="25">Multi-pass membrane protein</topology>
    </subcellularLocation>
</comment>
<comment type="subcellular location">
    <molecule>Non-structural protein 4</molecule>
    <subcellularLocation>
        <location evidence="25">Host membrane</location>
        <topology evidence="25">Multi-pass membrane protein</topology>
    </subcellularLocation>
</comment>
<comment type="subcellular location">
    <molecule>Non-structural protein 6</molecule>
    <subcellularLocation>
        <location evidence="25">Host membrane</location>
        <topology evidence="25">Multi-pass membrane protein</topology>
    </subcellularLocation>
</comment>
<comment type="subcellular location">
    <molecule>Non-structural protein 7</molecule>
    <subcellularLocation>
        <location evidence="1">Host cytoplasm</location>
        <location evidence="1">Host perinuclear region</location>
    </subcellularLocation>
    <text evidence="1">nsp7, nsp8, nsp9 and nsp10 are localized in cytoplasmic foci, largely perinuclear. Late in infection, they merge into confluent complexes (By similarity).</text>
</comment>
<comment type="subcellular location">
    <molecule>Non-structural protein 8</molecule>
    <subcellularLocation>
        <location evidence="1">Host cytoplasm</location>
        <location evidence="1">Host perinuclear region</location>
    </subcellularLocation>
    <text evidence="1">nsp7, nsp8, nsp9 and nsp10 are localized in cytoplasmic foci, largely perinuclear. Late in infection, they merge into confluent complexes (By similarity).</text>
</comment>
<comment type="subcellular location">
    <molecule>RNA-capping enzyme subunit nsp9</molecule>
    <subcellularLocation>
        <location evidence="1">Host cytoplasm</location>
        <location evidence="1">Host perinuclear region</location>
    </subcellularLocation>
    <text evidence="1">nsp7, nsp8, nsp9 and nsp10 are localized in cytoplasmic foci, largely perinuclear. Late in infection, they merge into confluent complexes (By similarity).</text>
</comment>
<comment type="subcellular location">
    <molecule>Non-structural protein 10</molecule>
    <subcellularLocation>
        <location evidence="1">Host cytoplasm</location>
        <location evidence="1">Host perinuclear region</location>
    </subcellularLocation>
    <text evidence="1">nsp7, nsp8, nsp9 and nsp10 are localized in cytoplasmic foci, largely perinuclear. Late in infection, they merge into confluent complexes (By similarity).</text>
</comment>
<comment type="alternative products">
    <event type="ribosomal frameshifting"/>
    <isoform>
        <id>P0C6T6-1</id>
        <name>Replicase polyprotein 1a</name>
        <name>pp1a</name>
        <name>ORF1a polyprotein</name>
        <sequence type="displayed"/>
    </isoform>
    <isoform>
        <id>P0C6W5-1</id>
        <name>Replicase polyprotein 1ab</name>
        <name>pp1ab</name>
        <sequence type="external"/>
    </isoform>
</comment>
<comment type="domain">
    <text evidence="1">The hydrophobic domains (HD) could mediate the membrane association of the replication complex and thereby alter the architecture of the host cell membrane.</text>
</comment>
<comment type="PTM">
    <text evidence="1">Specific enzymatic cleavages in vivo by its own proteases yield mature proteins. 3CL-PRO and PL-PRO proteinases are autocatalytically processed (By similarity).</text>
</comment>
<comment type="miscellaneous">
    <molecule>Isoform Replicase polyprotein 1a</molecule>
    <text>Produced by conventional translation.</text>
</comment>
<comment type="similarity">
    <text evidence="25">Belongs to the coronaviruses polyprotein 1ab family.</text>
</comment>
<proteinExistence type="inferred from homology"/>
<dbReference type="EC" id="3.4.19.12"/>
<dbReference type="EC" id="3.4.22.-"/>
<dbReference type="EC" id="3.4.22.69"/>
<dbReference type="EC" id="2.7.7.50"/>
<dbReference type="EMBL" id="EF065513">
    <property type="status" value="NOT_ANNOTATED_CDS"/>
    <property type="molecule type" value="Genomic_RNA"/>
</dbReference>
<dbReference type="SMR" id="P0C6T6"/>
<dbReference type="Proteomes" id="UP000006576">
    <property type="component" value="Genome"/>
</dbReference>
<dbReference type="GO" id="GO:0033644">
    <property type="term" value="C:host cell membrane"/>
    <property type="evidence" value="ECO:0007669"/>
    <property type="project" value="UniProtKB-SubCell"/>
</dbReference>
<dbReference type="GO" id="GO:0044220">
    <property type="term" value="C:host cell perinuclear region of cytoplasm"/>
    <property type="evidence" value="ECO:0007669"/>
    <property type="project" value="UniProtKB-SubCell"/>
</dbReference>
<dbReference type="GO" id="GO:0016020">
    <property type="term" value="C:membrane"/>
    <property type="evidence" value="ECO:0007669"/>
    <property type="project" value="UniProtKB-KW"/>
</dbReference>
<dbReference type="GO" id="GO:0004843">
    <property type="term" value="F:cysteine-type deubiquitinase activity"/>
    <property type="evidence" value="ECO:0007669"/>
    <property type="project" value="UniProtKB-EC"/>
</dbReference>
<dbReference type="GO" id="GO:0004197">
    <property type="term" value="F:cysteine-type endopeptidase activity"/>
    <property type="evidence" value="ECO:0007669"/>
    <property type="project" value="InterPro"/>
</dbReference>
<dbReference type="GO" id="GO:0002151">
    <property type="term" value="F:G-quadruplex RNA binding"/>
    <property type="evidence" value="ECO:0007669"/>
    <property type="project" value="InterPro"/>
</dbReference>
<dbReference type="GO" id="GO:0008168">
    <property type="term" value="F:methyltransferase activity"/>
    <property type="evidence" value="ECO:0007669"/>
    <property type="project" value="UniProtKB-KW"/>
</dbReference>
<dbReference type="GO" id="GO:0008242">
    <property type="term" value="F:omega peptidase activity"/>
    <property type="evidence" value="ECO:0007669"/>
    <property type="project" value="InterPro"/>
</dbReference>
<dbReference type="GO" id="GO:0003727">
    <property type="term" value="F:single-stranded RNA binding"/>
    <property type="evidence" value="ECO:0007669"/>
    <property type="project" value="InterPro"/>
</dbReference>
<dbReference type="GO" id="GO:0008270">
    <property type="term" value="F:zinc ion binding"/>
    <property type="evidence" value="ECO:0007669"/>
    <property type="project" value="UniProtKB-KW"/>
</dbReference>
<dbReference type="GO" id="GO:0032259">
    <property type="term" value="P:methylation"/>
    <property type="evidence" value="ECO:0007669"/>
    <property type="project" value="UniProtKB-KW"/>
</dbReference>
<dbReference type="GO" id="GO:0006508">
    <property type="term" value="P:proteolysis"/>
    <property type="evidence" value="ECO:0007669"/>
    <property type="project" value="UniProtKB-KW"/>
</dbReference>
<dbReference type="GO" id="GO:0010506">
    <property type="term" value="P:regulation of autophagy"/>
    <property type="evidence" value="ECO:0007669"/>
    <property type="project" value="InterPro"/>
</dbReference>
<dbReference type="GO" id="GO:0039520">
    <property type="term" value="P:symbiont-mediated activation of host autophagy"/>
    <property type="evidence" value="ECO:0007669"/>
    <property type="project" value="UniProtKB-KW"/>
</dbReference>
<dbReference type="GO" id="GO:0039595">
    <property type="term" value="P:symbiont-mediated degradation of host mRNA"/>
    <property type="evidence" value="ECO:0007669"/>
    <property type="project" value="UniProtKB-KW"/>
</dbReference>
<dbReference type="GO" id="GO:0039648">
    <property type="term" value="P:symbiont-mediated perturbation of host ubiquitin-like protein modification"/>
    <property type="evidence" value="ECO:0007669"/>
    <property type="project" value="UniProtKB-KW"/>
</dbReference>
<dbReference type="GO" id="GO:0039548">
    <property type="term" value="P:symbiont-mediated suppression of host cytoplasmic pattern recognition receptor signaling pathway via inhibition of IRF3 activity"/>
    <property type="evidence" value="ECO:0007669"/>
    <property type="project" value="UniProtKB-KW"/>
</dbReference>
<dbReference type="GO" id="GO:0039657">
    <property type="term" value="P:symbiont-mediated suppression of host gene expression"/>
    <property type="evidence" value="ECO:0007669"/>
    <property type="project" value="UniProtKB-KW"/>
</dbReference>
<dbReference type="GO" id="GO:0039579">
    <property type="term" value="P:symbiont-mediated suppression of host ISG15-protein conjugation"/>
    <property type="evidence" value="ECO:0007669"/>
    <property type="project" value="UniProtKB-KW"/>
</dbReference>
<dbReference type="GO" id="GO:0039502">
    <property type="term" value="P:symbiont-mediated suppression of host type I interferon-mediated signaling pathway"/>
    <property type="evidence" value="ECO:0007669"/>
    <property type="project" value="UniProtKB-KW"/>
</dbReference>
<dbReference type="GO" id="GO:0019079">
    <property type="term" value="P:viral genome replication"/>
    <property type="evidence" value="ECO:0007669"/>
    <property type="project" value="InterPro"/>
</dbReference>
<dbReference type="GO" id="GO:0019082">
    <property type="term" value="P:viral protein processing"/>
    <property type="evidence" value="ECO:0007669"/>
    <property type="project" value="InterPro"/>
</dbReference>
<dbReference type="GO" id="GO:0075523">
    <property type="term" value="P:viral translational frameshifting"/>
    <property type="evidence" value="ECO:0007669"/>
    <property type="project" value="UniProtKB-KW"/>
</dbReference>
<dbReference type="CDD" id="cd21901">
    <property type="entry name" value="alpha_betaCoV_Nsp10"/>
    <property type="match status" value="1"/>
</dbReference>
<dbReference type="CDD" id="cd21560">
    <property type="entry name" value="betaCoV-Nsp6"/>
    <property type="match status" value="1"/>
</dbReference>
<dbReference type="CDD" id="cd21518">
    <property type="entry name" value="betaCoV_Nsp2_HKU9-like"/>
    <property type="match status" value="1"/>
</dbReference>
<dbReference type="CDD" id="cd21666">
    <property type="entry name" value="betaCoV_Nsp5_Mpro"/>
    <property type="match status" value="1"/>
</dbReference>
<dbReference type="CDD" id="cd21827">
    <property type="entry name" value="betaCoV_Nsp7"/>
    <property type="match status" value="1"/>
</dbReference>
<dbReference type="CDD" id="cd21831">
    <property type="entry name" value="betaCoV_Nsp8"/>
    <property type="match status" value="1"/>
</dbReference>
<dbReference type="CDD" id="cd21898">
    <property type="entry name" value="betaCoV_Nsp9"/>
    <property type="match status" value="1"/>
</dbReference>
<dbReference type="CDD" id="cd21732">
    <property type="entry name" value="betaCoV_PLPro"/>
    <property type="match status" value="1"/>
</dbReference>
<dbReference type="CDD" id="cd21473">
    <property type="entry name" value="cv_Nsp4_TM"/>
    <property type="match status" value="1"/>
</dbReference>
<dbReference type="CDD" id="cd21877">
    <property type="entry name" value="HKU9-like_Nsp1"/>
    <property type="match status" value="1"/>
</dbReference>
<dbReference type="CDD" id="cd21813">
    <property type="entry name" value="HKU9-like_Nsp3_betaSM"/>
    <property type="match status" value="1"/>
</dbReference>
<dbReference type="CDD" id="cd21825">
    <property type="entry name" value="HKU9-like_Nsp3_NAB"/>
    <property type="match status" value="1"/>
</dbReference>
<dbReference type="CDD" id="cd21563">
    <property type="entry name" value="Macro_cv_SUD-M_Nsp3-like"/>
    <property type="match status" value="1"/>
</dbReference>
<dbReference type="CDD" id="cd21557">
    <property type="entry name" value="Macro_X_Nsp3-like"/>
    <property type="match status" value="1"/>
</dbReference>
<dbReference type="CDD" id="cd21537">
    <property type="entry name" value="SUD_C_HKU9_CoV_Nsp3"/>
    <property type="match status" value="1"/>
</dbReference>
<dbReference type="CDD" id="cd21715">
    <property type="entry name" value="TM_Y_HKU9-like_Nsp3_C"/>
    <property type="match status" value="1"/>
</dbReference>
<dbReference type="CDD" id="cd21467">
    <property type="entry name" value="Ubl1_cv_Nsp3_N-like"/>
    <property type="match status" value="1"/>
</dbReference>
<dbReference type="Gene3D" id="1.10.8.1190">
    <property type="match status" value="1"/>
</dbReference>
<dbReference type="Gene3D" id="2.60.120.1680">
    <property type="match status" value="1"/>
</dbReference>
<dbReference type="Gene3D" id="3.10.20.350">
    <property type="match status" value="1"/>
</dbReference>
<dbReference type="Gene3D" id="3.10.20.540">
    <property type="match status" value="1"/>
</dbReference>
<dbReference type="Gene3D" id="6.10.140.2090">
    <property type="match status" value="1"/>
</dbReference>
<dbReference type="Gene3D" id="1.10.150.420">
    <property type="entry name" value="Coronavirus nonstructural protein 4 C-terminus"/>
    <property type="match status" value="1"/>
</dbReference>
<dbReference type="Gene3D" id="3.40.220.10">
    <property type="entry name" value="Leucine Aminopeptidase, subunit E, domain 1"/>
    <property type="match status" value="1"/>
</dbReference>
<dbReference type="Gene3D" id="1.10.1840.10">
    <property type="entry name" value="main proteinase (3clpro) structure, domain 3"/>
    <property type="match status" value="1"/>
</dbReference>
<dbReference type="Gene3D" id="3.40.220.20">
    <property type="entry name" value="Nsp3, SUD-M subdomain"/>
    <property type="match status" value="1"/>
</dbReference>
<dbReference type="Gene3D" id="1.10.8.370">
    <property type="entry name" value="nsp7 replicase"/>
    <property type="match status" value="1"/>
</dbReference>
<dbReference type="Gene3D" id="3.30.70.3540">
    <property type="entry name" value="Nsp8 replicase, head domain"/>
    <property type="match status" value="1"/>
</dbReference>
<dbReference type="Gene3D" id="2.40.10.250">
    <property type="entry name" value="Replicase NSP9"/>
    <property type="match status" value="1"/>
</dbReference>
<dbReference type="Gene3D" id="3.40.50.11020">
    <property type="entry name" value="Replicase polyprotein, nucleic acid-binding domain"/>
    <property type="match status" value="1"/>
</dbReference>
<dbReference type="Gene3D" id="2.40.10.10">
    <property type="entry name" value="Trypsin-like serine proteases"/>
    <property type="match status" value="2"/>
</dbReference>
<dbReference type="InterPro" id="IPR046443">
    <property type="entry name" value="a/bCoV_NSP1_glob"/>
</dbReference>
<dbReference type="InterPro" id="IPR046442">
    <property type="entry name" value="bCoV_NSP1_C"/>
</dbReference>
<dbReference type="InterPro" id="IPR043613">
    <property type="entry name" value="CoV_NSP2_C"/>
</dbReference>
<dbReference type="InterPro" id="IPR047573">
    <property type="entry name" value="CoV_NSP2_M"/>
</dbReference>
<dbReference type="InterPro" id="IPR049894">
    <property type="entry name" value="COV_NSP3_3ECTO"/>
</dbReference>
<dbReference type="InterPro" id="IPR043611">
    <property type="entry name" value="CoV_NSP3_C"/>
</dbReference>
<dbReference type="InterPro" id="IPR047566">
    <property type="entry name" value="CoV_NSP3_Y"/>
</dbReference>
<dbReference type="InterPro" id="IPR032505">
    <property type="entry name" value="CoV_NSP4_C"/>
</dbReference>
<dbReference type="InterPro" id="IPR043612">
    <property type="entry name" value="CoV_NSP4_N"/>
</dbReference>
<dbReference type="InterPro" id="IPR022733">
    <property type="entry name" value="DPUP_SUD_C_bCoV"/>
</dbReference>
<dbReference type="InterPro" id="IPR002589">
    <property type="entry name" value="Macro_dom"/>
</dbReference>
<dbReference type="InterPro" id="IPR043472">
    <property type="entry name" value="Macro_dom-like"/>
</dbReference>
<dbReference type="InterPro" id="IPR044371">
    <property type="entry name" value="Macro_X_NSP3-like"/>
</dbReference>
<dbReference type="InterPro" id="IPR036333">
    <property type="entry name" value="NSP10_sf_CoV"/>
</dbReference>
<dbReference type="InterPro" id="IPR021590">
    <property type="entry name" value="NSP1_glob_bCoV"/>
</dbReference>
<dbReference type="InterPro" id="IPR044386">
    <property type="entry name" value="NSP2_HKU9-like"/>
</dbReference>
<dbReference type="InterPro" id="IPR043615">
    <property type="entry name" value="NSP2_N_CoV"/>
</dbReference>
<dbReference type="InterPro" id="IPR024375">
    <property type="entry name" value="NSP3_bCoV"/>
</dbReference>
<dbReference type="InterPro" id="IPR047567">
    <property type="entry name" value="NSP3_G2M_bCoV"/>
</dbReference>
<dbReference type="InterPro" id="IPR032592">
    <property type="entry name" value="NSP3_NAB_bCoV"/>
</dbReference>
<dbReference type="InterPro" id="IPR042570">
    <property type="entry name" value="NSP3_NAB_bCoV_sf"/>
</dbReference>
<dbReference type="InterPro" id="IPR038400">
    <property type="entry name" value="NSP3_SUD-M_sf_bCoV"/>
</dbReference>
<dbReference type="InterPro" id="IPR044352">
    <property type="entry name" value="Nsp3_SUD_C_HKU9_CoV"/>
</dbReference>
<dbReference type="InterPro" id="IPR044357">
    <property type="entry name" value="NSP3_Ubl1_dom_CoV"/>
</dbReference>
<dbReference type="InterPro" id="IPR044353">
    <property type="entry name" value="Nsp3_Ubl2_dom_CoV"/>
</dbReference>
<dbReference type="InterPro" id="IPR038083">
    <property type="entry name" value="NSP3A-like"/>
</dbReference>
<dbReference type="InterPro" id="IPR038123">
    <property type="entry name" value="NSP4_C_sf_CoV"/>
</dbReference>
<dbReference type="InterPro" id="IPR044367">
    <property type="entry name" value="NSP6_betaCoV"/>
</dbReference>
<dbReference type="InterPro" id="IPR043610">
    <property type="entry name" value="NSP6_CoV"/>
</dbReference>
<dbReference type="InterPro" id="IPR014828">
    <property type="entry name" value="NSP7_CoV"/>
</dbReference>
<dbReference type="InterPro" id="IPR037204">
    <property type="entry name" value="NSP7_sf_CoV"/>
</dbReference>
<dbReference type="InterPro" id="IPR014829">
    <property type="entry name" value="NSP8_CoV"/>
</dbReference>
<dbReference type="InterPro" id="IPR037230">
    <property type="entry name" value="NSP8_sf_CoV"/>
</dbReference>
<dbReference type="InterPro" id="IPR014822">
    <property type="entry name" value="NSP9_CoV"/>
</dbReference>
<dbReference type="InterPro" id="IPR036499">
    <property type="entry name" value="NSP9_sf_CoV"/>
</dbReference>
<dbReference type="InterPro" id="IPR013016">
    <property type="entry name" value="Peptidase_C16_CoV"/>
</dbReference>
<dbReference type="InterPro" id="IPR008740">
    <property type="entry name" value="Peptidase_C30_CoV"/>
</dbReference>
<dbReference type="InterPro" id="IPR043477">
    <property type="entry name" value="Peptidase_C30_dom3_CoV"/>
</dbReference>
<dbReference type="InterPro" id="IPR009003">
    <property type="entry name" value="Peptidase_S1_PA"/>
</dbReference>
<dbReference type="InterPro" id="IPR043504">
    <property type="entry name" value="Peptidase_S1_PA_chymotrypsin"/>
</dbReference>
<dbReference type="InterPro" id="IPR043177">
    <property type="entry name" value="PLpro_N_sf_CoV"/>
</dbReference>
<dbReference type="InterPro" id="IPR043503">
    <property type="entry name" value="PLpro_palm_finger_dom_CoV"/>
</dbReference>
<dbReference type="InterPro" id="IPR043178">
    <property type="entry name" value="PLpro_thumb_sf_CoV"/>
</dbReference>
<dbReference type="InterPro" id="IPR018995">
    <property type="entry name" value="RNA_synth_NSP10_CoV"/>
</dbReference>
<dbReference type="Pfam" id="PF16251">
    <property type="entry name" value="bCoV_NAB"/>
    <property type="match status" value="1"/>
</dbReference>
<dbReference type="Pfam" id="PF11501">
    <property type="entry name" value="bCoV_NSP1"/>
    <property type="match status" value="1"/>
</dbReference>
<dbReference type="Pfam" id="PF11633">
    <property type="entry name" value="bCoV_SUD_M"/>
    <property type="match status" value="1"/>
</dbReference>
<dbReference type="Pfam" id="PF09401">
    <property type="entry name" value="CoV_NSP10"/>
    <property type="match status" value="1"/>
</dbReference>
<dbReference type="Pfam" id="PF19212">
    <property type="entry name" value="CoV_NSP2_C"/>
    <property type="match status" value="1"/>
</dbReference>
<dbReference type="Pfam" id="PF19211">
    <property type="entry name" value="CoV_NSP2_N"/>
    <property type="match status" value="1"/>
</dbReference>
<dbReference type="Pfam" id="PF19218">
    <property type="entry name" value="CoV_NSP3_C"/>
    <property type="match status" value="1"/>
</dbReference>
<dbReference type="Pfam" id="PF16348">
    <property type="entry name" value="CoV_NSP4_C"/>
    <property type="match status" value="1"/>
</dbReference>
<dbReference type="Pfam" id="PF19217">
    <property type="entry name" value="CoV_NSP4_N"/>
    <property type="match status" value="1"/>
</dbReference>
<dbReference type="Pfam" id="PF19213">
    <property type="entry name" value="CoV_NSP6"/>
    <property type="match status" value="1"/>
</dbReference>
<dbReference type="Pfam" id="PF08716">
    <property type="entry name" value="CoV_NSP7"/>
    <property type="match status" value="1"/>
</dbReference>
<dbReference type="Pfam" id="PF08717">
    <property type="entry name" value="CoV_NSP8"/>
    <property type="match status" value="1"/>
</dbReference>
<dbReference type="Pfam" id="PF08710">
    <property type="entry name" value="CoV_NSP9"/>
    <property type="match status" value="1"/>
</dbReference>
<dbReference type="Pfam" id="PF08715">
    <property type="entry name" value="CoV_peptidase"/>
    <property type="match status" value="1"/>
</dbReference>
<dbReference type="Pfam" id="PF01661">
    <property type="entry name" value="Macro"/>
    <property type="match status" value="1"/>
</dbReference>
<dbReference type="Pfam" id="PF05409">
    <property type="entry name" value="Peptidase_C30"/>
    <property type="match status" value="1"/>
</dbReference>
<dbReference type="SMART" id="SM00506">
    <property type="entry name" value="A1pp"/>
    <property type="match status" value="1"/>
</dbReference>
<dbReference type="SUPFAM" id="SSF144246">
    <property type="entry name" value="Coronavirus NSP10-like"/>
    <property type="match status" value="1"/>
</dbReference>
<dbReference type="SUPFAM" id="SSF140367">
    <property type="entry name" value="Coronavirus NSP7-like"/>
    <property type="match status" value="1"/>
</dbReference>
<dbReference type="SUPFAM" id="SSF143076">
    <property type="entry name" value="Coronavirus NSP8-like"/>
    <property type="match status" value="1"/>
</dbReference>
<dbReference type="SUPFAM" id="SSF52949">
    <property type="entry name" value="Macro domain-like"/>
    <property type="match status" value="1"/>
</dbReference>
<dbReference type="SUPFAM" id="SSF159936">
    <property type="entry name" value="NSP3A-like"/>
    <property type="match status" value="1"/>
</dbReference>
<dbReference type="SUPFAM" id="SSF101816">
    <property type="entry name" value="Replicase NSP9"/>
    <property type="match status" value="1"/>
</dbReference>
<dbReference type="SUPFAM" id="SSF50494">
    <property type="entry name" value="Trypsin-like serine proteases"/>
    <property type="match status" value="1"/>
</dbReference>
<dbReference type="PROSITE" id="PS51963">
    <property type="entry name" value="BCOV_NSP1_C"/>
    <property type="match status" value="1"/>
</dbReference>
<dbReference type="PROSITE" id="PS51942">
    <property type="entry name" value="BCOV_NSP3C_C"/>
    <property type="match status" value="1"/>
</dbReference>
<dbReference type="PROSITE" id="PS51941">
    <property type="entry name" value="BCOV_NSP3C_M"/>
    <property type="match status" value="1"/>
</dbReference>
<dbReference type="PROSITE" id="PS51994">
    <property type="entry name" value="BCOV_NSP3E_G2M"/>
    <property type="match status" value="1"/>
</dbReference>
<dbReference type="PROSITE" id="PS51945">
    <property type="entry name" value="BCOV_NSP3E_NAB"/>
    <property type="match status" value="1"/>
</dbReference>
<dbReference type="PROSITE" id="PS51993">
    <property type="entry name" value="COV_3ECTO"/>
    <property type="match status" value="1"/>
</dbReference>
<dbReference type="PROSITE" id="PS51952">
    <property type="entry name" value="COV_EXON_MTASE_COACT"/>
    <property type="match status" value="1"/>
</dbReference>
<dbReference type="PROSITE" id="PS51962">
    <property type="entry name" value="COV_NSP1"/>
    <property type="match status" value="1"/>
</dbReference>
<dbReference type="PROSITE" id="PS51991">
    <property type="entry name" value="COV_NSP2_C"/>
    <property type="match status" value="1"/>
</dbReference>
<dbReference type="PROSITE" id="PS51990">
    <property type="entry name" value="COV_NSP2_M"/>
    <property type="match status" value="1"/>
</dbReference>
<dbReference type="PROSITE" id="PS51989">
    <property type="entry name" value="COV_NSP2_N"/>
    <property type="match status" value="1"/>
</dbReference>
<dbReference type="PROSITE" id="PS51992">
    <property type="entry name" value="COV_NSP3_Y"/>
    <property type="match status" value="1"/>
</dbReference>
<dbReference type="PROSITE" id="PS51943">
    <property type="entry name" value="COV_NSP3A_UBL"/>
    <property type="match status" value="1"/>
</dbReference>
<dbReference type="PROSITE" id="PS51944">
    <property type="entry name" value="COV_NSP3D_UBL"/>
    <property type="match status" value="1"/>
</dbReference>
<dbReference type="PROSITE" id="PS51946">
    <property type="entry name" value="COV_NSP4C"/>
    <property type="match status" value="1"/>
</dbReference>
<dbReference type="PROSITE" id="PS51949">
    <property type="entry name" value="COV_NSP7"/>
    <property type="match status" value="1"/>
</dbReference>
<dbReference type="PROSITE" id="PS51950">
    <property type="entry name" value="COV_NSP8"/>
    <property type="match status" value="1"/>
</dbReference>
<dbReference type="PROSITE" id="PS51951">
    <property type="entry name" value="COV_NSP9_SSRNA_BD"/>
    <property type="match status" value="1"/>
</dbReference>
<dbReference type="PROSITE" id="PS51442">
    <property type="entry name" value="M_PRO"/>
    <property type="match status" value="1"/>
</dbReference>
<dbReference type="PROSITE" id="PS51154">
    <property type="entry name" value="MACRO"/>
    <property type="match status" value="1"/>
</dbReference>
<dbReference type="PROSITE" id="PS51124">
    <property type="entry name" value="PEPTIDASE_C16"/>
    <property type="match status" value="1"/>
</dbReference>
<evidence type="ECO:0000250" key="1"/>
<evidence type="ECO:0000250" key="2">
    <source>
        <dbReference type="UniProtKB" id="P0DTC1"/>
    </source>
</evidence>
<evidence type="ECO:0000255" key="3"/>
<evidence type="ECO:0000255" key="4">
    <source>
        <dbReference type="PROSITE-ProRule" id="PRU00214"/>
    </source>
</evidence>
<evidence type="ECO:0000255" key="5">
    <source>
        <dbReference type="PROSITE-ProRule" id="PRU00444"/>
    </source>
</evidence>
<evidence type="ECO:0000255" key="6">
    <source>
        <dbReference type="PROSITE-ProRule" id="PRU00490"/>
    </source>
</evidence>
<evidence type="ECO:0000255" key="7">
    <source>
        <dbReference type="PROSITE-ProRule" id="PRU00772"/>
    </source>
</evidence>
<evidence type="ECO:0000255" key="8">
    <source>
        <dbReference type="PROSITE-ProRule" id="PRU01289"/>
    </source>
</evidence>
<evidence type="ECO:0000255" key="9">
    <source>
        <dbReference type="PROSITE-ProRule" id="PRU01290"/>
    </source>
</evidence>
<evidence type="ECO:0000255" key="10">
    <source>
        <dbReference type="PROSITE-ProRule" id="PRU01291"/>
    </source>
</evidence>
<evidence type="ECO:0000255" key="11">
    <source>
        <dbReference type="PROSITE-ProRule" id="PRU01294"/>
    </source>
</evidence>
<evidence type="ECO:0000255" key="12">
    <source>
        <dbReference type="PROSITE-ProRule" id="PRU01295"/>
    </source>
</evidence>
<evidence type="ECO:0000255" key="13">
    <source>
        <dbReference type="PROSITE-ProRule" id="PRU01296"/>
    </source>
</evidence>
<evidence type="ECO:0000255" key="14">
    <source>
        <dbReference type="PROSITE-ProRule" id="PRU01297"/>
    </source>
</evidence>
<evidence type="ECO:0000255" key="15">
    <source>
        <dbReference type="PROSITE-ProRule" id="PRU01307"/>
    </source>
</evidence>
<evidence type="ECO:0000255" key="16">
    <source>
        <dbReference type="PROSITE-ProRule" id="PRU01308"/>
    </source>
</evidence>
<evidence type="ECO:0000255" key="17">
    <source>
        <dbReference type="PROSITE-ProRule" id="PRU01333"/>
    </source>
</evidence>
<evidence type="ECO:0000255" key="18">
    <source>
        <dbReference type="PROSITE-ProRule" id="PRU01334"/>
    </source>
</evidence>
<evidence type="ECO:0000255" key="19">
    <source>
        <dbReference type="PROSITE-ProRule" id="PRU01335"/>
    </source>
</evidence>
<evidence type="ECO:0000255" key="20">
    <source>
        <dbReference type="PROSITE-ProRule" id="PRU01336"/>
    </source>
</evidence>
<evidence type="ECO:0000255" key="21">
    <source>
        <dbReference type="PROSITE-ProRule" id="PRU01337"/>
    </source>
</evidence>
<evidence type="ECO:0000255" key="22">
    <source>
        <dbReference type="PROSITE-ProRule" id="PRU01338"/>
    </source>
</evidence>
<evidence type="ECO:0000256" key="23">
    <source>
        <dbReference type="SAM" id="MobiDB-lite"/>
    </source>
</evidence>
<evidence type="ECO:0000269" key="24">
    <source>
    </source>
</evidence>
<evidence type="ECO:0000305" key="25"/>
<accession>P0C6T6</accession>
<accession>A3EXG5</accession>
<feature type="chain" id="PRO_0000338110" description="Replicase polyprotein 1a">
    <location>
        <begin position="1"/>
        <end position="4248"/>
    </location>
</feature>
<feature type="chain" id="PRO_0000338111" description="Non-structural protein 1" evidence="3">
    <location>
        <begin position="1"/>
        <end position="175"/>
    </location>
</feature>
<feature type="chain" id="PRO_0000338112" description="Non-structural protein 2" evidence="3">
    <location>
        <begin position="176"/>
        <end position="772"/>
    </location>
</feature>
<feature type="chain" id="PRO_0000338113" description="Papain-like protease nsp3" evidence="3">
    <location>
        <begin position="773"/>
        <end position="2609"/>
    </location>
</feature>
<feature type="chain" id="PRO_0000338114" description="Non-structural protein 4" evidence="3">
    <location>
        <begin position="2610"/>
        <end position="3103"/>
    </location>
</feature>
<feature type="chain" id="PRO_0000338115" description="3C-like proteinase nsp5" evidence="3">
    <location>
        <begin position="3104"/>
        <end position="3409"/>
    </location>
</feature>
<feature type="chain" id="PRO_0000338116" description="Non-structural protein 6" evidence="3">
    <location>
        <begin position="3410"/>
        <end position="3699"/>
    </location>
</feature>
<feature type="chain" id="PRO_0000338117" description="Non-structural protein 7" evidence="3">
    <location>
        <begin position="3700"/>
        <end position="3782"/>
    </location>
</feature>
<feature type="chain" id="PRO_0000338118" description="Non-structural protein 8" evidence="3">
    <location>
        <begin position="3783"/>
        <end position="3982"/>
    </location>
</feature>
<feature type="chain" id="PRO_0000338119" description="RNA-capping enzyme subunit nsp9" evidence="3">
    <location>
        <begin position="3983"/>
        <end position="4094"/>
    </location>
</feature>
<feature type="chain" id="PRO_0000338121" description="Non-structural protein 11" evidence="3">
    <location>
        <begin position="4094"/>
        <end position="4248"/>
    </location>
</feature>
<feature type="chain" id="PRO_0000338120" description="Non-structural protein 10" evidence="3">
    <location>
        <begin position="4095"/>
        <end position="4233"/>
    </location>
</feature>
<feature type="transmembrane region" description="Helical" evidence="3">
    <location>
        <begin position="2040"/>
        <end position="2060"/>
    </location>
</feature>
<feature type="transmembrane region" description="Helical" evidence="3">
    <location>
        <begin position="2081"/>
        <end position="2101"/>
    </location>
</feature>
<feature type="transmembrane region" description="Helical" evidence="3">
    <location>
        <begin position="2162"/>
        <end position="2182"/>
    </location>
</feature>
<feature type="transmembrane region" description="Helical" evidence="3">
    <location>
        <begin position="2183"/>
        <end position="2203"/>
    </location>
</feature>
<feature type="transmembrane region" description="Helical" evidence="3">
    <location>
        <begin position="2218"/>
        <end position="2238"/>
    </location>
</feature>
<feature type="transmembrane region" description="Helical" evidence="3">
    <location>
        <begin position="2621"/>
        <end position="2641"/>
    </location>
</feature>
<feature type="transmembrane region" description="Helical" evidence="3">
    <location>
        <begin position="2719"/>
        <end position="2739"/>
    </location>
</feature>
<feature type="transmembrane region" description="Helical" evidence="3">
    <location>
        <begin position="2865"/>
        <end position="2885"/>
    </location>
</feature>
<feature type="transmembrane region" description="Helical" evidence="3">
    <location>
        <begin position="2887"/>
        <end position="2907"/>
    </location>
</feature>
<feature type="transmembrane region" description="Helical" evidence="3">
    <location>
        <begin position="2916"/>
        <end position="2936"/>
    </location>
</feature>
<feature type="transmembrane region" description="Helical" evidence="3">
    <location>
        <begin position="2946"/>
        <end position="2966"/>
    </location>
</feature>
<feature type="transmembrane region" description="Helical" evidence="3">
    <location>
        <begin position="2970"/>
        <end position="2990"/>
    </location>
</feature>
<feature type="transmembrane region" description="Helical" evidence="3">
    <location>
        <begin position="3423"/>
        <end position="3443"/>
    </location>
</feature>
<feature type="transmembrane region" description="Helical" evidence="3">
    <location>
        <begin position="3449"/>
        <end position="3469"/>
    </location>
</feature>
<feature type="transmembrane region" description="Helical" evidence="3">
    <location>
        <begin position="3474"/>
        <end position="3494"/>
    </location>
</feature>
<feature type="transmembrane region" description="Helical" evidence="3">
    <location>
        <begin position="3517"/>
        <end position="3537"/>
    </location>
</feature>
<feature type="transmembrane region" description="Helical" evidence="3">
    <location>
        <begin position="3569"/>
        <end position="3589"/>
    </location>
</feature>
<feature type="transmembrane region" description="Helical" evidence="3">
    <location>
        <begin position="3592"/>
        <end position="3612"/>
    </location>
</feature>
<feature type="transmembrane region" description="Helical" evidence="3">
    <location>
        <begin position="3620"/>
        <end position="3640"/>
    </location>
</feature>
<feature type="domain" description="CoV Nsp1 globular" evidence="15">
    <location>
        <begin position="10"/>
        <end position="131"/>
    </location>
</feature>
<feature type="domain" description="BetaCoV Nsp1 C-terminal" evidence="16">
    <location>
        <begin position="149"/>
        <end position="175"/>
    </location>
</feature>
<feature type="domain" description="CoV Nsp2 N-terminal" evidence="17">
    <location>
        <begin position="177"/>
        <end position="431"/>
    </location>
</feature>
<feature type="domain" description="CoV Nsp2 middle" evidence="18">
    <location>
        <begin position="432"/>
        <end position="644"/>
    </location>
</feature>
<feature type="domain" description="CoV Nsp2 C-terminal" evidence="19">
    <location>
        <begin position="646"/>
        <end position="772"/>
    </location>
</feature>
<feature type="domain" description="Ubiquitin-like 1" evidence="4">
    <location>
        <begin position="775"/>
        <end position="885"/>
    </location>
</feature>
<feature type="domain" description="Macro 1" evidence="6">
    <location>
        <begin position="930"/>
        <end position="1097"/>
    </location>
</feature>
<feature type="domain" description="Macro 2" evidence="6">
    <location>
        <begin position="1216"/>
        <end position="1340"/>
    </location>
</feature>
<feature type="domain" description="DPUP" evidence="8">
    <location>
        <begin position="1345"/>
        <end position="1417"/>
    </location>
</feature>
<feature type="domain" description="Ubiquitin-like 2" evidence="4">
    <location>
        <begin position="1423"/>
        <end position="1478"/>
    </location>
</feature>
<feature type="domain" description="Peptidase C16" evidence="5">
    <location>
        <begin position="1492"/>
        <end position="1757"/>
    </location>
</feature>
<feature type="domain" description="Nucleic acid-binding" evidence="9">
    <location>
        <begin position="1770"/>
        <end position="1870"/>
    </location>
</feature>
<feature type="domain" description="G2M" evidence="22">
    <location>
        <begin position="1883"/>
        <end position="2012"/>
    </location>
</feature>
<feature type="domain" description="3Ecto" evidence="21">
    <location>
        <begin position="2105"/>
        <end position="2162"/>
    </location>
</feature>
<feature type="domain" description="CoV Nsp3 Y" evidence="20">
    <location>
        <begin position="2239"/>
        <end position="2610"/>
    </location>
</feature>
<feature type="domain" description="Nsp4C" evidence="10">
    <location>
        <begin position="3007"/>
        <end position="3103"/>
    </location>
</feature>
<feature type="domain" description="Peptidase C30" evidence="7">
    <location>
        <begin position="3104"/>
        <end position="3409"/>
    </location>
</feature>
<feature type="domain" description="RdRp Nsp7 cofactor" evidence="11">
    <location>
        <begin position="3700"/>
        <end position="3782"/>
    </location>
</feature>
<feature type="domain" description="RdRp Nsp8 cofactor" evidence="12">
    <location>
        <begin position="3783"/>
        <end position="3982"/>
    </location>
</feature>
<feature type="domain" description="Nsp9 ssRNA-binding" evidence="13">
    <location>
        <begin position="3983"/>
        <end position="4094"/>
    </location>
</feature>
<feature type="domain" description="ExoN/MTase coactivator" evidence="14">
    <location>
        <begin position="4095"/>
        <end position="4233"/>
    </location>
</feature>
<feature type="zinc finger region" description="C4-type" evidence="5">
    <location>
        <begin position="1610"/>
        <end position="1647"/>
    </location>
</feature>
<feature type="zinc finger region" evidence="1">
    <location>
        <begin position="4168"/>
        <end position="4184"/>
    </location>
</feature>
<feature type="zinc finger region" evidence="1">
    <location>
        <begin position="4211"/>
        <end position="4224"/>
    </location>
</feature>
<feature type="region of interest" description="C4" evidence="17">
    <location>
        <begin position="312"/>
        <end position="333"/>
    </location>
</feature>
<feature type="region of interest" description="Disordered" evidence="23">
    <location>
        <begin position="1188"/>
        <end position="1207"/>
    </location>
</feature>
<feature type="region of interest" description="HD1" evidence="1">
    <location>
        <begin position="2015"/>
        <end position="2238"/>
    </location>
</feature>
<feature type="region of interest" description="Y1" evidence="20">
    <location>
        <begin position="2239"/>
        <end position="2329"/>
    </location>
</feature>
<feature type="region of interest" description="ZF1" evidence="20">
    <location>
        <begin position="2243"/>
        <end position="2256"/>
    </location>
</feature>
<feature type="region of interest" description="ZF2" evidence="20">
    <location>
        <begin position="2289"/>
        <end position="2299"/>
    </location>
</feature>
<feature type="region of interest" description="CoV-Y" evidence="20">
    <location>
        <begin position="2330"/>
        <end position="2610"/>
    </location>
</feature>
<feature type="region of interest" description="Y2" evidence="20">
    <location>
        <begin position="2330"/>
        <end position="2425"/>
    </location>
</feature>
<feature type="region of interest" description="Y3" evidence="20">
    <location>
        <begin position="2426"/>
        <end position="2509"/>
    </location>
</feature>
<feature type="region of interest" description="Y4" evidence="20">
    <location>
        <begin position="2510"/>
        <end position="2610"/>
    </location>
</feature>
<feature type="region of interest" description="HD2" evidence="1">
    <location>
        <begin position="2621"/>
        <end position="2990"/>
    </location>
</feature>
<feature type="region of interest" description="HD3" evidence="1">
    <location>
        <begin position="3423"/>
        <end position="3640"/>
    </location>
</feature>
<feature type="compositionally biased region" description="Low complexity" evidence="23">
    <location>
        <begin position="1195"/>
        <end position="1206"/>
    </location>
</feature>
<feature type="active site" description="For PL-PRO activity" evidence="5">
    <location>
        <position position="1533"/>
    </location>
</feature>
<feature type="active site" description="For PL-PRO activity" evidence="5">
    <location>
        <position position="1694"/>
    </location>
</feature>
<feature type="active site" description="For PL-PRO activity" evidence="5">
    <location>
        <position position="1708"/>
    </location>
</feature>
<feature type="active site" description="For 3CL-PRO activity" evidence="7">
    <location>
        <position position="3144"/>
    </location>
</feature>
<feature type="active site" description="For 3CL-PRO activity" evidence="7">
    <location>
        <position position="3248"/>
    </location>
</feature>
<feature type="binding site" evidence="17">
    <location>
        <position position="312"/>
    </location>
    <ligand>
        <name>Zn(2+)</name>
        <dbReference type="ChEBI" id="CHEBI:29105"/>
        <label>1</label>
    </ligand>
</feature>
<feature type="binding site" evidence="17">
    <location>
        <position position="315"/>
    </location>
    <ligand>
        <name>Zn(2+)</name>
        <dbReference type="ChEBI" id="CHEBI:29105"/>
        <label>1</label>
    </ligand>
</feature>
<feature type="binding site" evidence="17">
    <location>
        <position position="331"/>
    </location>
    <ligand>
        <name>Zn(2+)</name>
        <dbReference type="ChEBI" id="CHEBI:29105"/>
        <label>1</label>
    </ligand>
</feature>
<feature type="binding site" evidence="17">
    <location>
        <position position="333"/>
    </location>
    <ligand>
        <name>Zn(2+)</name>
        <dbReference type="ChEBI" id="CHEBI:29105"/>
        <label>1</label>
    </ligand>
</feature>
<feature type="binding site" evidence="5">
    <location>
        <position position="1610"/>
    </location>
    <ligand>
        <name>Zn(2+)</name>
        <dbReference type="ChEBI" id="CHEBI:29105"/>
        <label>2</label>
    </ligand>
</feature>
<feature type="binding site" evidence="5">
    <location>
        <position position="1613"/>
    </location>
    <ligand>
        <name>Zn(2+)</name>
        <dbReference type="ChEBI" id="CHEBI:29105"/>
        <label>2</label>
    </ligand>
</feature>
<feature type="binding site" evidence="5">
    <location>
        <position position="1645"/>
    </location>
    <ligand>
        <name>Zn(2+)</name>
        <dbReference type="ChEBI" id="CHEBI:29105"/>
        <label>2</label>
    </ligand>
</feature>
<feature type="binding site" evidence="5">
    <location>
        <position position="1647"/>
    </location>
    <ligand>
        <name>Zn(2+)</name>
        <dbReference type="ChEBI" id="CHEBI:29105"/>
        <label>2</label>
    </ligand>
</feature>
<feature type="binding site" evidence="20">
    <location>
        <position position="2243"/>
    </location>
    <ligand>
        <name>Zn(2+)</name>
        <dbReference type="ChEBI" id="CHEBI:29105"/>
        <label>3</label>
    </ligand>
</feature>
<feature type="binding site" evidence="20">
    <location>
        <position position="2248"/>
    </location>
    <ligand>
        <name>Zn(2+)</name>
        <dbReference type="ChEBI" id="CHEBI:29105"/>
        <label>3</label>
    </ligand>
</feature>
<feature type="binding site" evidence="20">
    <location>
        <position position="2253"/>
    </location>
    <ligand>
        <name>Zn(2+)</name>
        <dbReference type="ChEBI" id="CHEBI:29105"/>
        <label>3</label>
    </ligand>
</feature>
<feature type="binding site" evidence="20">
    <location>
        <position position="2256"/>
    </location>
    <ligand>
        <name>Zn(2+)</name>
        <dbReference type="ChEBI" id="CHEBI:29105"/>
        <label>3</label>
    </ligand>
</feature>
<feature type="binding site" evidence="20">
    <location>
        <position position="2289"/>
    </location>
    <ligand>
        <name>Zn(2+)</name>
        <dbReference type="ChEBI" id="CHEBI:29105"/>
        <label>4</label>
    </ligand>
</feature>
<feature type="binding site" evidence="20">
    <location>
        <position position="2292"/>
    </location>
    <ligand>
        <name>Zn(2+)</name>
        <dbReference type="ChEBI" id="CHEBI:29105"/>
        <label>4</label>
    </ligand>
</feature>
<feature type="binding site" evidence="20">
    <location>
        <position position="2296"/>
    </location>
    <ligand>
        <name>Zn(2+)</name>
        <dbReference type="ChEBI" id="CHEBI:29105"/>
        <label>4</label>
    </ligand>
</feature>
<feature type="binding site" evidence="20">
    <location>
        <position position="2299"/>
    </location>
    <ligand>
        <name>Zn(2+)</name>
        <dbReference type="ChEBI" id="CHEBI:29105"/>
        <label>4</label>
    </ligand>
</feature>
<feature type="binding site" evidence="14">
    <location>
        <position position="4168"/>
    </location>
    <ligand>
        <name>Zn(2+)</name>
        <dbReference type="ChEBI" id="CHEBI:29105"/>
        <label>5</label>
    </ligand>
</feature>
<feature type="binding site" evidence="14">
    <location>
        <position position="4171"/>
    </location>
    <ligand>
        <name>Zn(2+)</name>
        <dbReference type="ChEBI" id="CHEBI:29105"/>
        <label>5</label>
    </ligand>
</feature>
<feature type="binding site" evidence="14">
    <location>
        <position position="4177"/>
    </location>
    <ligand>
        <name>Zn(2+)</name>
        <dbReference type="ChEBI" id="CHEBI:29105"/>
        <label>5</label>
    </ligand>
</feature>
<feature type="binding site" evidence="14">
    <location>
        <position position="4184"/>
    </location>
    <ligand>
        <name>Zn(2+)</name>
        <dbReference type="ChEBI" id="CHEBI:29105"/>
        <label>5</label>
    </ligand>
</feature>
<feature type="binding site" evidence="14">
    <location>
        <position position="4211"/>
    </location>
    <ligand>
        <name>Zn(2+)</name>
        <dbReference type="ChEBI" id="CHEBI:29105"/>
        <label>6</label>
    </ligand>
</feature>
<feature type="binding site" evidence="14">
    <location>
        <position position="4214"/>
    </location>
    <ligand>
        <name>Zn(2+)</name>
        <dbReference type="ChEBI" id="CHEBI:29105"/>
        <label>6</label>
    </ligand>
</feature>
<feature type="binding site" evidence="14">
    <location>
        <position position="4222"/>
    </location>
    <ligand>
        <name>Zn(2+)</name>
        <dbReference type="ChEBI" id="CHEBI:29105"/>
        <label>6</label>
    </ligand>
</feature>
<feature type="binding site" evidence="14">
    <location>
        <position position="4224"/>
    </location>
    <ligand>
        <name>Zn(2+)</name>
        <dbReference type="ChEBI" id="CHEBI:29105"/>
        <label>6</label>
    </ligand>
</feature>
<feature type="site" description="Cleavage" evidence="3">
    <location>
        <begin position="175"/>
        <end position="176"/>
    </location>
</feature>
<feature type="site" description="Cleavage; by PL-PRO" evidence="3">
    <location>
        <begin position="772"/>
        <end position="773"/>
    </location>
</feature>
<feature type="site" description="Cleavage; by PL-PRO" evidence="3">
    <location>
        <begin position="2609"/>
        <end position="2610"/>
    </location>
</feature>
<feature type="site" description="Cleavage; by 3CL-PRO" evidence="3">
    <location>
        <begin position="3103"/>
        <end position="3104"/>
    </location>
</feature>
<feature type="site" description="Cleavage; by 3CL-PRO" evidence="3">
    <location>
        <begin position="3409"/>
        <end position="3410"/>
    </location>
</feature>
<feature type="site" description="Cleavage; by 3CL-PRO" evidence="3">
    <location>
        <begin position="3699"/>
        <end position="3700"/>
    </location>
</feature>
<feature type="site" description="Cleavage; by 3CL-PRO" evidence="3">
    <location>
        <begin position="3782"/>
        <end position="3783"/>
    </location>
</feature>
<feature type="site" description="Cleavage; by 3CL-PRO" evidence="3">
    <location>
        <begin position="3982"/>
        <end position="3983"/>
    </location>
</feature>
<feature type="site" description="Cleavage; by 3CL-PRO" evidence="3">
    <location>
        <begin position="4094"/>
        <end position="4095"/>
    </location>
</feature>
<feature type="site" description="Cleavage; by 3CL-PRO" evidence="3">
    <location>
        <begin position="4233"/>
        <end position="4234"/>
    </location>
</feature>
<feature type="disulfide bond" evidence="21">
    <location>
        <begin position="2121"/>
        <end position="2138"/>
    </location>
</feature>
<protein>
    <recommendedName>
        <fullName>Replicase polyprotein 1a</fullName>
        <shortName>pp1a</shortName>
    </recommendedName>
    <alternativeName>
        <fullName>ORF1a polyprotein</fullName>
    </alternativeName>
    <component>
        <recommendedName>
            <fullName>Non-structural protein 1</fullName>
            <shortName>nsp1</shortName>
        </recommendedName>
        <alternativeName>
            <fullName>Leader protein</fullName>
        </alternativeName>
    </component>
    <component>
        <recommendedName>
            <fullName>Non-structural protein 2</fullName>
            <shortName>nsp2</shortName>
        </recommendedName>
        <alternativeName>
            <fullName>p65 homolog</fullName>
        </alternativeName>
    </component>
    <component>
        <recommendedName>
            <fullName>Papain-like protease nsp3</fullName>
            <shortName>PL-PRO</shortName>
            <ecNumber>3.4.19.12</ecNumber>
            <ecNumber>3.4.22.-</ecNumber>
        </recommendedName>
        <alternativeName>
            <fullName>Non-structural protein 3</fullName>
            <shortName>nsp3</shortName>
        </alternativeName>
        <alternativeName>
            <fullName>PL2-PRO</fullName>
        </alternativeName>
    </component>
    <component>
        <recommendedName>
            <fullName>Non-structural protein 4</fullName>
            <shortName>nsp4</shortName>
        </recommendedName>
    </component>
    <component>
        <recommendedName>
            <fullName>3C-like proteinase nsp5</fullName>
            <shortName>3CL-PRO</shortName>
            <shortName>3CLp</shortName>
            <ecNumber>3.4.22.69</ecNumber>
        </recommendedName>
        <alternativeName>
            <fullName>nsp5</fullName>
        </alternativeName>
    </component>
    <component>
        <recommendedName>
            <fullName>Non-structural protein 6</fullName>
            <shortName>nsp6</shortName>
        </recommendedName>
    </component>
    <component>
        <recommendedName>
            <fullName>Non-structural protein 7</fullName>
            <shortName>nsp7</shortName>
        </recommendedName>
    </component>
    <component>
        <recommendedName>
            <fullName>Non-structural protein 8</fullName>
            <shortName>nsp8</shortName>
        </recommendedName>
    </component>
    <component>
        <recommendedName>
            <fullName>RNA-capping enzyme subunit nsp9</fullName>
        </recommendedName>
        <alternativeName>
            <fullName>Non-structural protein 9</fullName>
            <shortName>nsp9</shortName>
            <ecNumber>2.7.7.50</ecNumber>
        </alternativeName>
    </component>
    <component>
        <recommendedName>
            <fullName>Non-structural protein 10</fullName>
            <shortName>nsp10</shortName>
        </recommendedName>
        <alternativeName>
            <fullName>Growth factor-like peptide</fullName>
            <shortName>GFL</shortName>
        </alternativeName>
    </component>
    <component>
        <recommendedName>
            <fullName>Non-structural protein 11</fullName>
            <shortName>nsp11</shortName>
        </recommendedName>
    </component>
</protein>
<organismHost>
    <name type="scientific">Rousettus leschenaultii</name>
    <name type="common">Leschenault's rousette</name>
    <name type="synonym">Pteropus leschenaultii</name>
    <dbReference type="NCBI Taxonomy" id="9408"/>
</organismHost>